<gene>
    <name type="primary">Otp</name>
</gene>
<organism>
    <name type="scientific">Heliocidaris tuberculata</name>
    <name type="common">Sea urchin</name>
    <dbReference type="NCBI Taxonomy" id="7635"/>
    <lineage>
        <taxon>Eukaryota</taxon>
        <taxon>Metazoa</taxon>
        <taxon>Echinodermata</taxon>
        <taxon>Eleutherozoa</taxon>
        <taxon>Echinozoa</taxon>
        <taxon>Echinoidea</taxon>
        <taxon>Euechinoidea</taxon>
        <taxon>Echinacea</taxon>
        <taxon>Camarodonta</taxon>
        <taxon>Echinidea</taxon>
        <taxon>Echinometridae</taxon>
        <taxon>Heliocidaris</taxon>
    </lineage>
</organism>
<comment type="function">
    <text>Involved in larval skeletal patterning.</text>
</comment>
<comment type="subcellular location">
    <subcellularLocation>
        <location evidence="1 2">Nucleus</location>
    </subcellularLocation>
</comment>
<comment type="developmental stage">
    <text evidence="4">Expressed at the late gastrula stage, in 2 cells of the oral ectoderm.</text>
</comment>
<comment type="similarity">
    <text evidence="5">Belongs to the paired homeobox family. Bicoid subfamily.</text>
</comment>
<feature type="chain" id="PRO_0000292435" description="Homeobox protein orthopedia">
    <location>
        <begin position="1"/>
        <end position="363"/>
    </location>
</feature>
<feature type="DNA-binding region" description="Homeobox" evidence="1">
    <location>
        <begin position="114"/>
        <end position="173"/>
    </location>
</feature>
<feature type="region of interest" description="Disordered" evidence="3">
    <location>
        <begin position="48"/>
        <end position="119"/>
    </location>
</feature>
<feature type="region of interest" description="Disordered" evidence="3">
    <location>
        <begin position="300"/>
        <end position="328"/>
    </location>
</feature>
<feature type="short sequence motif" description="OAR" evidence="2">
    <location>
        <begin position="342"/>
        <end position="355"/>
    </location>
</feature>
<feature type="compositionally biased region" description="Gly residues" evidence="3">
    <location>
        <begin position="69"/>
        <end position="97"/>
    </location>
</feature>
<feature type="compositionally biased region" description="Low complexity" evidence="3">
    <location>
        <begin position="300"/>
        <end position="313"/>
    </location>
</feature>
<keyword id="KW-0217">Developmental protein</keyword>
<keyword id="KW-0238">DNA-binding</keyword>
<keyword id="KW-0371">Homeobox</keyword>
<keyword id="KW-0539">Nucleus</keyword>
<keyword id="KW-0804">Transcription</keyword>
<keyword id="KW-0805">Transcription regulation</keyword>
<dbReference type="EMBL" id="AY452140">
    <property type="protein sequence ID" value="AAS00592.1"/>
    <property type="molecule type" value="mRNA"/>
</dbReference>
<dbReference type="SMR" id="Q6SR68"/>
<dbReference type="GO" id="GO:0005634">
    <property type="term" value="C:nucleus"/>
    <property type="evidence" value="ECO:0007669"/>
    <property type="project" value="UniProtKB-SubCell"/>
</dbReference>
<dbReference type="GO" id="GO:0003677">
    <property type="term" value="F:DNA binding"/>
    <property type="evidence" value="ECO:0007669"/>
    <property type="project" value="UniProtKB-KW"/>
</dbReference>
<dbReference type="GO" id="GO:0000981">
    <property type="term" value="F:DNA-binding transcription factor activity, RNA polymerase II-specific"/>
    <property type="evidence" value="ECO:0007669"/>
    <property type="project" value="InterPro"/>
</dbReference>
<dbReference type="GO" id="GO:0030182">
    <property type="term" value="P:neuron differentiation"/>
    <property type="evidence" value="ECO:0007669"/>
    <property type="project" value="TreeGrafter"/>
</dbReference>
<dbReference type="CDD" id="cd00086">
    <property type="entry name" value="homeodomain"/>
    <property type="match status" value="1"/>
</dbReference>
<dbReference type="FunFam" id="1.10.10.60:FF:000719">
    <property type="entry name" value="Homeobox protein orthopedia-like Protein"/>
    <property type="match status" value="1"/>
</dbReference>
<dbReference type="Gene3D" id="1.10.10.60">
    <property type="entry name" value="Homeodomain-like"/>
    <property type="match status" value="1"/>
</dbReference>
<dbReference type="InterPro" id="IPR001356">
    <property type="entry name" value="HD"/>
</dbReference>
<dbReference type="InterPro" id="IPR017970">
    <property type="entry name" value="Homeobox_CS"/>
</dbReference>
<dbReference type="InterPro" id="IPR009057">
    <property type="entry name" value="Homeodomain-like_sf"/>
</dbReference>
<dbReference type="InterPro" id="IPR000047">
    <property type="entry name" value="HTH_motif"/>
</dbReference>
<dbReference type="InterPro" id="IPR003654">
    <property type="entry name" value="OAR_dom"/>
</dbReference>
<dbReference type="InterPro" id="IPR051895">
    <property type="entry name" value="OTP_Homeobox"/>
</dbReference>
<dbReference type="PANTHER" id="PTHR46770">
    <property type="entry name" value="HOMEOBOX PROTEIN ORTHOPEDIA"/>
    <property type="match status" value="1"/>
</dbReference>
<dbReference type="PANTHER" id="PTHR46770:SF1">
    <property type="entry name" value="HOMEOBOX PROTEIN ORTHOPEDIA"/>
    <property type="match status" value="1"/>
</dbReference>
<dbReference type="Pfam" id="PF00046">
    <property type="entry name" value="Homeodomain"/>
    <property type="match status" value="1"/>
</dbReference>
<dbReference type="Pfam" id="PF03826">
    <property type="entry name" value="OAR"/>
    <property type="match status" value="1"/>
</dbReference>
<dbReference type="PRINTS" id="PR00031">
    <property type="entry name" value="HTHREPRESSR"/>
</dbReference>
<dbReference type="SMART" id="SM00389">
    <property type="entry name" value="HOX"/>
    <property type="match status" value="1"/>
</dbReference>
<dbReference type="SUPFAM" id="SSF46689">
    <property type="entry name" value="Homeodomain-like"/>
    <property type="match status" value="1"/>
</dbReference>
<dbReference type="PROSITE" id="PS00027">
    <property type="entry name" value="HOMEOBOX_1"/>
    <property type="match status" value="1"/>
</dbReference>
<dbReference type="PROSITE" id="PS50071">
    <property type="entry name" value="HOMEOBOX_2"/>
    <property type="match status" value="1"/>
</dbReference>
<dbReference type="PROSITE" id="PS50803">
    <property type="entry name" value="OAR"/>
    <property type="match status" value="1"/>
</dbReference>
<evidence type="ECO:0000255" key="1">
    <source>
        <dbReference type="PROSITE-ProRule" id="PRU00108"/>
    </source>
</evidence>
<evidence type="ECO:0000255" key="2">
    <source>
        <dbReference type="PROSITE-ProRule" id="PRU00138"/>
    </source>
</evidence>
<evidence type="ECO:0000256" key="3">
    <source>
        <dbReference type="SAM" id="MobiDB-lite"/>
    </source>
</evidence>
<evidence type="ECO:0000269" key="4">
    <source>
    </source>
</evidence>
<evidence type="ECO:0000305" key="5"/>
<sequence length="363" mass="38037">MERTLAHVPSMELSTEALLVTGGLDNTNKMITSSAVRNDDGTMISQHSEKVSYGTSGAPDGSTPPVTAAGGGSEGNGIGGGGGGGGGGGMVGDGTGHSVGSSGSGNDDDKPAKQKRHRTRFTPAQLNELERNFAKTHYPDIFMREEIAMRVGLTESRVQVWFQNRRAKWKKRKKTTNVFRTPGALLPSHGLAQFPSPMNDSFCNFHGQDTRGWPAMSGMTTHMAPHMTTHMPSHQMSQMGGGPGSALALPPSLPRQGLGQTMQQQSVNCSMGQTTGLNTLSMGTNGSMGSMTSMYQPSLGGMTTGSMSSGLSSPSPPNLPVTDSSTDLSCSVSDAGDMWRGTSIASLRRKALEHAASLNGIFR</sequence>
<proteinExistence type="evidence at transcript level"/>
<accession>Q6SR68</accession>
<reference key="1">
    <citation type="journal article" date="2003" name="J. Exp. Zool. B Mol. Dev. Evol.">
        <title>Evolution of OTP-independent larval skeleton patterning in the direct-developing sea urchin, Heliocidaris erythrogramma.</title>
        <authorList>
            <person name="Zhou N."/>
            <person name="Wilson K.A."/>
            <person name="Andrews M.E."/>
            <person name="Kauffman J.S."/>
            <person name="Raff R.A."/>
        </authorList>
    </citation>
    <scope>NUCLEOTIDE SEQUENCE [MRNA]</scope>
    <scope>DEVELOPMENTAL STAGE</scope>
</reference>
<name>OTP_HELTB</name>
<protein>
    <recommendedName>
        <fullName>Homeobox protein orthopedia</fullName>
    </recommendedName>
</protein>